<comment type="function">
    <text evidence="1">Involved in the regulation of the intracellular balance of NAD and NADP, and is a key enzyme in the biosynthesis of NADP. Catalyzes specifically the phosphorylation on 2'-hydroxyl of the adenosine moiety of NAD to yield NADP.</text>
</comment>
<comment type="catalytic activity">
    <reaction evidence="1">
        <text>NAD(+) + ATP = ADP + NADP(+) + H(+)</text>
        <dbReference type="Rhea" id="RHEA:18629"/>
        <dbReference type="ChEBI" id="CHEBI:15378"/>
        <dbReference type="ChEBI" id="CHEBI:30616"/>
        <dbReference type="ChEBI" id="CHEBI:57540"/>
        <dbReference type="ChEBI" id="CHEBI:58349"/>
        <dbReference type="ChEBI" id="CHEBI:456216"/>
        <dbReference type="EC" id="2.7.1.23"/>
    </reaction>
</comment>
<comment type="cofactor">
    <cofactor evidence="1">
        <name>a divalent metal cation</name>
        <dbReference type="ChEBI" id="CHEBI:60240"/>
    </cofactor>
</comment>
<comment type="subcellular location">
    <subcellularLocation>
        <location evidence="1">Cytoplasm</location>
    </subcellularLocation>
</comment>
<comment type="similarity">
    <text evidence="1">Belongs to the NAD kinase family.</text>
</comment>
<accession>Q1GB65</accession>
<keyword id="KW-0067">ATP-binding</keyword>
<keyword id="KW-0963">Cytoplasm</keyword>
<keyword id="KW-0418">Kinase</keyword>
<keyword id="KW-0520">NAD</keyword>
<keyword id="KW-0521">NADP</keyword>
<keyword id="KW-0547">Nucleotide-binding</keyword>
<keyword id="KW-1185">Reference proteome</keyword>
<keyword id="KW-0808">Transferase</keyword>
<feature type="chain" id="PRO_1000059871" description="NAD kinase">
    <location>
        <begin position="1"/>
        <end position="265"/>
    </location>
</feature>
<feature type="active site" description="Proton acceptor" evidence="1">
    <location>
        <position position="45"/>
    </location>
</feature>
<feature type="binding site" evidence="1">
    <location>
        <begin position="45"/>
        <end position="46"/>
    </location>
    <ligand>
        <name>NAD(+)</name>
        <dbReference type="ChEBI" id="CHEBI:57540"/>
    </ligand>
</feature>
<feature type="binding site" evidence="1">
    <location>
        <begin position="122"/>
        <end position="123"/>
    </location>
    <ligand>
        <name>NAD(+)</name>
        <dbReference type="ChEBI" id="CHEBI:57540"/>
    </ligand>
</feature>
<feature type="binding site" evidence="1">
    <location>
        <position position="148"/>
    </location>
    <ligand>
        <name>NAD(+)</name>
        <dbReference type="ChEBI" id="CHEBI:57540"/>
    </ligand>
</feature>
<feature type="binding site" evidence="1">
    <location>
        <position position="150"/>
    </location>
    <ligand>
        <name>NAD(+)</name>
        <dbReference type="ChEBI" id="CHEBI:57540"/>
    </ligand>
</feature>
<feature type="binding site" evidence="1">
    <location>
        <begin position="161"/>
        <end position="166"/>
    </location>
    <ligand>
        <name>NAD(+)</name>
        <dbReference type="ChEBI" id="CHEBI:57540"/>
    </ligand>
</feature>
<feature type="binding site" evidence="1">
    <location>
        <position position="185"/>
    </location>
    <ligand>
        <name>NAD(+)</name>
        <dbReference type="ChEBI" id="CHEBI:57540"/>
    </ligand>
</feature>
<sequence>MKVAIVHNDRVTTQVAVRHLQVLLAEKGILQDQQHPDLVISVGGDGTLISAFHKYKQQLDKVCFAGIHTGHLGFYTDWRNYDMEKLVDALASHPVEENEVGYPLLDMKVTTSCGEKRFLALNEASIKRISKTMEAEVWLGGERFENFRGDGLCVSTPTGSTAYSKSLGGAVIHPRLKTLQLTEIASINNLVFRTVGSPIVIAPDEWITIVPKISDRVVVIVDGERISLTDVQKVDYKIAAEEIRFYQYGHHHFWERVNDAFIGDR</sequence>
<gene>
    <name evidence="1" type="primary">nadK</name>
    <name type="ordered locus">Ldb0585</name>
</gene>
<organism>
    <name type="scientific">Lactobacillus delbrueckii subsp. bulgaricus (strain ATCC 11842 / DSM 20081 / BCRC 10696 / JCM 1002 / NBRC 13953 / NCIMB 11778 / NCTC 12712 / WDCM 00102 / Lb 14)</name>
    <dbReference type="NCBI Taxonomy" id="390333"/>
    <lineage>
        <taxon>Bacteria</taxon>
        <taxon>Bacillati</taxon>
        <taxon>Bacillota</taxon>
        <taxon>Bacilli</taxon>
        <taxon>Lactobacillales</taxon>
        <taxon>Lactobacillaceae</taxon>
        <taxon>Lactobacillus</taxon>
    </lineage>
</organism>
<proteinExistence type="inferred from homology"/>
<name>NADK_LACDA</name>
<dbReference type="EC" id="2.7.1.23" evidence="1"/>
<dbReference type="EMBL" id="CR954253">
    <property type="protein sequence ID" value="CAI97415.1"/>
    <property type="molecule type" value="Genomic_DNA"/>
</dbReference>
<dbReference type="RefSeq" id="WP_003618877.1">
    <property type="nucleotide sequence ID" value="NZ_JQAV01000001.1"/>
</dbReference>
<dbReference type="SMR" id="Q1GB65"/>
<dbReference type="STRING" id="390333.Ldb0585"/>
<dbReference type="KEGG" id="ldb:Ldb0585"/>
<dbReference type="PATRIC" id="fig|390333.13.peg.212"/>
<dbReference type="eggNOG" id="COG0061">
    <property type="taxonomic scope" value="Bacteria"/>
</dbReference>
<dbReference type="HOGENOM" id="CLU_008831_0_3_9"/>
<dbReference type="BioCyc" id="LDEL390333:LDB_RS02510-MONOMER"/>
<dbReference type="Proteomes" id="UP000001259">
    <property type="component" value="Chromosome"/>
</dbReference>
<dbReference type="GO" id="GO:0005737">
    <property type="term" value="C:cytoplasm"/>
    <property type="evidence" value="ECO:0007669"/>
    <property type="project" value="UniProtKB-SubCell"/>
</dbReference>
<dbReference type="GO" id="GO:0005524">
    <property type="term" value="F:ATP binding"/>
    <property type="evidence" value="ECO:0007669"/>
    <property type="project" value="UniProtKB-KW"/>
</dbReference>
<dbReference type="GO" id="GO:0046872">
    <property type="term" value="F:metal ion binding"/>
    <property type="evidence" value="ECO:0007669"/>
    <property type="project" value="UniProtKB-UniRule"/>
</dbReference>
<dbReference type="GO" id="GO:0051287">
    <property type="term" value="F:NAD binding"/>
    <property type="evidence" value="ECO:0007669"/>
    <property type="project" value="UniProtKB-ARBA"/>
</dbReference>
<dbReference type="GO" id="GO:0003951">
    <property type="term" value="F:NAD+ kinase activity"/>
    <property type="evidence" value="ECO:0007669"/>
    <property type="project" value="UniProtKB-UniRule"/>
</dbReference>
<dbReference type="GO" id="GO:0019674">
    <property type="term" value="P:NAD metabolic process"/>
    <property type="evidence" value="ECO:0007669"/>
    <property type="project" value="InterPro"/>
</dbReference>
<dbReference type="GO" id="GO:0006741">
    <property type="term" value="P:NADP biosynthetic process"/>
    <property type="evidence" value="ECO:0007669"/>
    <property type="project" value="UniProtKB-UniRule"/>
</dbReference>
<dbReference type="Gene3D" id="3.40.50.10330">
    <property type="entry name" value="Probable inorganic polyphosphate/atp-NAD kinase, domain 1"/>
    <property type="match status" value="1"/>
</dbReference>
<dbReference type="Gene3D" id="2.60.200.30">
    <property type="entry name" value="Probable inorganic polyphosphate/atp-NAD kinase, domain 2"/>
    <property type="match status" value="1"/>
</dbReference>
<dbReference type="HAMAP" id="MF_00361">
    <property type="entry name" value="NAD_kinase"/>
    <property type="match status" value="1"/>
</dbReference>
<dbReference type="InterPro" id="IPR017438">
    <property type="entry name" value="ATP-NAD_kinase_N"/>
</dbReference>
<dbReference type="InterPro" id="IPR017437">
    <property type="entry name" value="ATP-NAD_kinase_PpnK-typ_C"/>
</dbReference>
<dbReference type="InterPro" id="IPR016064">
    <property type="entry name" value="NAD/diacylglycerol_kinase_sf"/>
</dbReference>
<dbReference type="InterPro" id="IPR002504">
    <property type="entry name" value="NADK"/>
</dbReference>
<dbReference type="NCBIfam" id="NF003424">
    <property type="entry name" value="PRK04885.1"/>
    <property type="match status" value="1"/>
</dbReference>
<dbReference type="PANTHER" id="PTHR20275">
    <property type="entry name" value="NAD KINASE"/>
    <property type="match status" value="1"/>
</dbReference>
<dbReference type="PANTHER" id="PTHR20275:SF0">
    <property type="entry name" value="NAD KINASE"/>
    <property type="match status" value="1"/>
</dbReference>
<dbReference type="Pfam" id="PF01513">
    <property type="entry name" value="NAD_kinase"/>
    <property type="match status" value="1"/>
</dbReference>
<dbReference type="Pfam" id="PF20143">
    <property type="entry name" value="NAD_kinase_C"/>
    <property type="match status" value="1"/>
</dbReference>
<dbReference type="SUPFAM" id="SSF111331">
    <property type="entry name" value="NAD kinase/diacylglycerol kinase-like"/>
    <property type="match status" value="1"/>
</dbReference>
<evidence type="ECO:0000255" key="1">
    <source>
        <dbReference type="HAMAP-Rule" id="MF_00361"/>
    </source>
</evidence>
<protein>
    <recommendedName>
        <fullName evidence="1">NAD kinase</fullName>
        <ecNumber evidence="1">2.7.1.23</ecNumber>
    </recommendedName>
    <alternativeName>
        <fullName evidence="1">ATP-dependent NAD kinase</fullName>
    </alternativeName>
</protein>
<reference key="1">
    <citation type="journal article" date="2006" name="Proc. Natl. Acad. Sci. U.S.A.">
        <title>The complete genome sequence of Lactobacillus bulgaricus reveals extensive and ongoing reductive evolution.</title>
        <authorList>
            <person name="van de Guchte M."/>
            <person name="Penaud S."/>
            <person name="Grimaldi C."/>
            <person name="Barbe V."/>
            <person name="Bryson K."/>
            <person name="Nicolas P."/>
            <person name="Robert C."/>
            <person name="Oztas S."/>
            <person name="Mangenot S."/>
            <person name="Couloux A."/>
            <person name="Loux V."/>
            <person name="Dervyn R."/>
            <person name="Bossy R."/>
            <person name="Bolotin A."/>
            <person name="Batto J.-M."/>
            <person name="Walunas T."/>
            <person name="Gibrat J.-F."/>
            <person name="Bessieres P."/>
            <person name="Weissenbach J."/>
            <person name="Ehrlich S.D."/>
            <person name="Maguin E."/>
        </authorList>
    </citation>
    <scope>NUCLEOTIDE SEQUENCE [LARGE SCALE GENOMIC DNA]</scope>
    <source>
        <strain>ATCC 11842 / DSM 20081 / BCRC 10696 / JCM 1002 / NBRC 13953 / NCIMB 11778 / NCTC 12712 / WDCM 00102 / Lb 14</strain>
    </source>
</reference>